<name>RADB_ARCFU</name>
<organism>
    <name type="scientific">Archaeoglobus fulgidus (strain ATCC 49558 / DSM 4304 / JCM 9628 / NBRC 100126 / VC-16)</name>
    <dbReference type="NCBI Taxonomy" id="224325"/>
    <lineage>
        <taxon>Archaea</taxon>
        <taxon>Methanobacteriati</taxon>
        <taxon>Methanobacteriota</taxon>
        <taxon>Archaeoglobi</taxon>
        <taxon>Archaeoglobales</taxon>
        <taxon>Archaeoglobaceae</taxon>
        <taxon>Archaeoglobus</taxon>
    </lineage>
</organism>
<proteinExistence type="inferred from homology"/>
<gene>
    <name type="primary">radB</name>
    <name type="ordered locus">AF_2096</name>
</gene>
<reference key="1">
    <citation type="journal article" date="1997" name="Nature">
        <title>The complete genome sequence of the hyperthermophilic, sulphate-reducing archaeon Archaeoglobus fulgidus.</title>
        <authorList>
            <person name="Klenk H.-P."/>
            <person name="Clayton R.A."/>
            <person name="Tomb J.-F."/>
            <person name="White O."/>
            <person name="Nelson K.E."/>
            <person name="Ketchum K.A."/>
            <person name="Dodson R.J."/>
            <person name="Gwinn M.L."/>
            <person name="Hickey E.K."/>
            <person name="Peterson J.D."/>
            <person name="Richardson D.L."/>
            <person name="Kerlavage A.R."/>
            <person name="Graham D.E."/>
            <person name="Kyrpides N.C."/>
            <person name="Fleischmann R.D."/>
            <person name="Quackenbush J."/>
            <person name="Lee N.H."/>
            <person name="Sutton G.G."/>
            <person name="Gill S.R."/>
            <person name="Kirkness E.F."/>
            <person name="Dougherty B.A."/>
            <person name="McKenney K."/>
            <person name="Adams M.D."/>
            <person name="Loftus B.J."/>
            <person name="Peterson S.N."/>
            <person name="Reich C.I."/>
            <person name="McNeil L.K."/>
            <person name="Badger J.H."/>
            <person name="Glodek A."/>
            <person name="Zhou L."/>
            <person name="Overbeek R."/>
            <person name="Gocayne J.D."/>
            <person name="Weidman J.F."/>
            <person name="McDonald L.A."/>
            <person name="Utterback T.R."/>
            <person name="Cotton M.D."/>
            <person name="Spriggs T."/>
            <person name="Artiach P."/>
            <person name="Kaine B.P."/>
            <person name="Sykes S.M."/>
            <person name="Sadow P.W."/>
            <person name="D'Andrea K.P."/>
            <person name="Bowman C."/>
            <person name="Fujii C."/>
            <person name="Garland S.A."/>
            <person name="Mason T.M."/>
            <person name="Olsen G.J."/>
            <person name="Fraser C.M."/>
            <person name="Smith H.O."/>
            <person name="Woese C.R."/>
            <person name="Venter J.C."/>
        </authorList>
    </citation>
    <scope>NUCLEOTIDE SEQUENCE [LARGE SCALE GENOMIC DNA]</scope>
    <source>
        <strain>ATCC 49558 / DSM 4304 / JCM 9628 / NBRC 100126 / VC-16</strain>
    </source>
</reference>
<feature type="chain" id="PRO_0000150111" description="DNA repair and recombination protein RadB">
    <location>
        <begin position="1"/>
        <end position="221"/>
    </location>
</feature>
<feature type="binding site" evidence="2">
    <location>
        <begin position="31"/>
        <end position="38"/>
    </location>
    <ligand>
        <name>ATP</name>
        <dbReference type="ChEBI" id="CHEBI:30616"/>
    </ligand>
</feature>
<keyword id="KW-0067">ATP-binding</keyword>
<keyword id="KW-0227">DNA damage</keyword>
<keyword id="KW-0233">DNA recombination</keyword>
<keyword id="KW-0238">DNA-binding</keyword>
<keyword id="KW-0547">Nucleotide-binding</keyword>
<keyword id="KW-1185">Reference proteome</keyword>
<sequence length="221" mass="24936">MQRMLIPTGSKCIDSLLGGGVETGTVTQIYGHGGTGKTTLCLMLAKNAAEQFKVAYIDTEGLSGERVRQIFGDERLFSNVFVYEVYRFRQQGVAIQEAEKLCRSEKVKLVIVDCFTSLYRSELEDDRKQIKIKRELTSQLTFLLGMARKYDVAVVITNQMFTDVGSGVDRPLGGPSLEHLSKVIIALERSNELRKATLIKHRWMKEGKSCFYRITDRGIEP</sequence>
<comment type="function">
    <text evidence="1">Involved in DNA repair and in homologous recombination. May regulate the cleavage reactions of the branch-structured DNA. Has a very weak ATPase activity that is not stimulated by DNA. Binds DNA but does not promote DNA strands exchange (By similarity).</text>
</comment>
<comment type="similarity">
    <text evidence="3">Belongs to the eukaryotic RecA-like protein family. RadB subfamily.</text>
</comment>
<evidence type="ECO:0000250" key="1"/>
<evidence type="ECO:0000255" key="2"/>
<evidence type="ECO:0000305" key="3"/>
<protein>
    <recommendedName>
        <fullName>DNA repair and recombination protein RadB</fullName>
    </recommendedName>
</protein>
<accession>O28184</accession>
<dbReference type="EMBL" id="AE000782">
    <property type="protein sequence ID" value="AAB89159.1"/>
    <property type="molecule type" value="Genomic_DNA"/>
</dbReference>
<dbReference type="PIR" id="H69511">
    <property type="entry name" value="H69511"/>
</dbReference>
<dbReference type="SMR" id="O28184"/>
<dbReference type="STRING" id="224325.AF_2096"/>
<dbReference type="PaxDb" id="224325-AF_2096"/>
<dbReference type="EnsemblBacteria" id="AAB89159">
    <property type="protein sequence ID" value="AAB89159"/>
    <property type="gene ID" value="AF_2096"/>
</dbReference>
<dbReference type="KEGG" id="afu:AF_2096"/>
<dbReference type="eggNOG" id="arCOG00417">
    <property type="taxonomic scope" value="Archaea"/>
</dbReference>
<dbReference type="HOGENOM" id="CLU_041732_2_0_2"/>
<dbReference type="OrthoDB" id="17644at2157"/>
<dbReference type="PhylomeDB" id="O28184"/>
<dbReference type="Proteomes" id="UP000002199">
    <property type="component" value="Chromosome"/>
</dbReference>
<dbReference type="GO" id="GO:0005524">
    <property type="term" value="F:ATP binding"/>
    <property type="evidence" value="ECO:0007669"/>
    <property type="project" value="UniProtKB-UniRule"/>
</dbReference>
<dbReference type="GO" id="GO:0016887">
    <property type="term" value="F:ATP hydrolysis activity"/>
    <property type="evidence" value="ECO:0007669"/>
    <property type="project" value="InterPro"/>
</dbReference>
<dbReference type="GO" id="GO:0140664">
    <property type="term" value="F:ATP-dependent DNA damage sensor activity"/>
    <property type="evidence" value="ECO:0007669"/>
    <property type="project" value="InterPro"/>
</dbReference>
<dbReference type="GO" id="GO:0003684">
    <property type="term" value="F:damaged DNA binding"/>
    <property type="evidence" value="ECO:0007669"/>
    <property type="project" value="UniProtKB-UniRule"/>
</dbReference>
<dbReference type="GO" id="GO:0006310">
    <property type="term" value="P:DNA recombination"/>
    <property type="evidence" value="ECO:0007669"/>
    <property type="project" value="UniProtKB-UniRule"/>
</dbReference>
<dbReference type="GO" id="GO:0006281">
    <property type="term" value="P:DNA repair"/>
    <property type="evidence" value="ECO:0007669"/>
    <property type="project" value="UniProtKB-UniRule"/>
</dbReference>
<dbReference type="CDD" id="cd01394">
    <property type="entry name" value="archRadB"/>
    <property type="match status" value="1"/>
</dbReference>
<dbReference type="Gene3D" id="3.40.50.300">
    <property type="entry name" value="P-loop containing nucleotide triphosphate hydrolases"/>
    <property type="match status" value="1"/>
</dbReference>
<dbReference type="HAMAP" id="MF_00350">
    <property type="entry name" value="RadB"/>
    <property type="match status" value="1"/>
</dbReference>
<dbReference type="InterPro" id="IPR003593">
    <property type="entry name" value="AAA+_ATPase"/>
</dbReference>
<dbReference type="InterPro" id="IPR013632">
    <property type="entry name" value="DNA_recomb/repair_Rad51_C"/>
</dbReference>
<dbReference type="InterPro" id="IPR011939">
    <property type="entry name" value="DNA_repair_and_recomb_RadB"/>
</dbReference>
<dbReference type="InterPro" id="IPR027417">
    <property type="entry name" value="P-loop_NTPase"/>
</dbReference>
<dbReference type="InterPro" id="IPR020588">
    <property type="entry name" value="RecA_ATP-bd"/>
</dbReference>
<dbReference type="NCBIfam" id="TIGR02237">
    <property type="entry name" value="recomb_radB"/>
    <property type="match status" value="1"/>
</dbReference>
<dbReference type="PANTHER" id="PTHR22942:SF47">
    <property type="entry name" value="DNA REPAIR AND RECOMBINATION PROTEIN RADB"/>
    <property type="match status" value="1"/>
</dbReference>
<dbReference type="PANTHER" id="PTHR22942">
    <property type="entry name" value="RECA/RAD51/RADA DNA STRAND-PAIRING FAMILY MEMBER"/>
    <property type="match status" value="1"/>
</dbReference>
<dbReference type="Pfam" id="PF08423">
    <property type="entry name" value="Rad51"/>
    <property type="match status" value="1"/>
</dbReference>
<dbReference type="PIRSF" id="PIRSF003336">
    <property type="entry name" value="RadB"/>
    <property type="match status" value="1"/>
</dbReference>
<dbReference type="PRINTS" id="PR01874">
    <property type="entry name" value="DNAREPAIRADA"/>
</dbReference>
<dbReference type="SMART" id="SM00382">
    <property type="entry name" value="AAA"/>
    <property type="match status" value="1"/>
</dbReference>
<dbReference type="SUPFAM" id="SSF52540">
    <property type="entry name" value="P-loop containing nucleoside triphosphate hydrolases"/>
    <property type="match status" value="1"/>
</dbReference>
<dbReference type="PROSITE" id="PS50162">
    <property type="entry name" value="RECA_2"/>
    <property type="match status" value="1"/>
</dbReference>